<organism>
    <name type="scientific">Saccharophagus degradans (strain 2-40 / ATCC 43961 / DSM 17024)</name>
    <dbReference type="NCBI Taxonomy" id="203122"/>
    <lineage>
        <taxon>Bacteria</taxon>
        <taxon>Pseudomonadati</taxon>
        <taxon>Pseudomonadota</taxon>
        <taxon>Gammaproteobacteria</taxon>
        <taxon>Cellvibrionales</taxon>
        <taxon>Cellvibrionaceae</taxon>
        <taxon>Saccharophagus</taxon>
    </lineage>
</organism>
<name>SECA_SACD2</name>
<sequence length="917" mass="103926">MFGKILRSIFGSKNDRELKRMGKQVKLINELESTFVKLTDEELKAKTAEFKKRHQDGESLNALLPEAFAAAREASKRVMGMRHFDVQLIGGMTLHEGCIAEMRTGEGKTLMATLAAYLNAISGKGVHIVTVNDYLARRDANWMTPLYAALGLTTGSVYSMQPQQEKREAYAADITYGTNNEFGFDYLRDNMALRKEDRMQRPLNFAIVDEVDSILIDEARTPLIISGAAEDSSELYRAINKFIPSLKRQEIVEKGEEPSELGHYTLDEKTRQVELTEMGHEVIEDTLTKAGLLKEDDSLYAAGNLGLLHHVYAALKAHVLFHRNVEYIIQNDQVVLIDEHTGRTMAGRRLSEGLHQALEAKEGLQIQAESQTLASTTFQNYFRIYPKLSGMTGTADTEAFEFRHIYGLNVVVIPTNKPIQRTDLNDLVFLSVEEKYEAIVRDVNEYRAKGVPVLVGTASVETSEAMSERLKKADIPHEVLNAKQHEREAEIIANAGRPGNVTIATNMAGRGTDIVLGGNLEAELAKLENPTEEQIAKVKSEWQTRHDQVVAAGGLHIIGTERHESRRIDNQLRGRAGRQGDPGLSRFYLSLEDNLMRIFASDRMRSFMQSIGMEKGEAIEHRMVTNAIEKAQRKVEGRNFDYRKQILEYDDVANDQRRVIYSQRNELLDADEIHDAIDGIRQDVIADVIAGFIPPQSVEEQWDVAGLEQSLANEYGVQLPIQKWLDDDDKLNEESLRDKITQAMDDAYNVKREQLGNSVVMLEKQLMLHVLDQLWKEHLQNMDHLRQGIGLRAYAQKNPKQEYKRESFEMFQTLLESLKHDVIRLLFRVQPMTEEQMNEMEKRRQEEAERQRQRMQLRHAEAPSQLAAPATPATPEELSELKPERPYVRGGSKVGRNDPCPCGSGQKYKSCHGKLTG</sequence>
<accession>Q21MG1</accession>
<comment type="function">
    <text evidence="1">Part of the Sec protein translocase complex. Interacts with the SecYEG preprotein conducting channel. Has a central role in coupling the hydrolysis of ATP to the transfer of proteins into and across the cell membrane, serving both as a receptor for the preprotein-SecB complex and as an ATP-driven molecular motor driving the stepwise translocation of polypeptide chains across the membrane.</text>
</comment>
<comment type="catalytic activity">
    <reaction evidence="1">
        <text>ATP + H2O + cellular proteinSide 1 = ADP + phosphate + cellular proteinSide 2.</text>
        <dbReference type="EC" id="7.4.2.8"/>
    </reaction>
</comment>
<comment type="cofactor">
    <cofactor evidence="1">
        <name>Zn(2+)</name>
        <dbReference type="ChEBI" id="CHEBI:29105"/>
    </cofactor>
    <text evidence="1">May bind 1 zinc ion per subunit.</text>
</comment>
<comment type="subunit">
    <text evidence="1">Monomer and homodimer. Part of the essential Sec protein translocation apparatus which comprises SecA, SecYEG and auxiliary proteins SecDF-YajC and YidC.</text>
</comment>
<comment type="subcellular location">
    <subcellularLocation>
        <location evidence="1">Cell inner membrane</location>
        <topology evidence="1">Peripheral membrane protein</topology>
        <orientation evidence="1">Cytoplasmic side</orientation>
    </subcellularLocation>
    <subcellularLocation>
        <location evidence="1">Cytoplasm</location>
    </subcellularLocation>
    <text evidence="1">Distribution is 50-50.</text>
</comment>
<comment type="similarity">
    <text evidence="1">Belongs to the SecA family.</text>
</comment>
<proteinExistence type="inferred from homology"/>
<evidence type="ECO:0000255" key="1">
    <source>
        <dbReference type="HAMAP-Rule" id="MF_01382"/>
    </source>
</evidence>
<evidence type="ECO:0000256" key="2">
    <source>
        <dbReference type="SAM" id="MobiDB-lite"/>
    </source>
</evidence>
<dbReference type="EC" id="7.4.2.8" evidence="1"/>
<dbReference type="EMBL" id="CP000282">
    <property type="protein sequence ID" value="ABD80118.1"/>
    <property type="molecule type" value="Genomic_DNA"/>
</dbReference>
<dbReference type="RefSeq" id="WP_011467339.1">
    <property type="nucleotide sequence ID" value="NC_007912.1"/>
</dbReference>
<dbReference type="SMR" id="Q21MG1"/>
<dbReference type="STRING" id="203122.Sde_0856"/>
<dbReference type="GeneID" id="98612538"/>
<dbReference type="KEGG" id="sde:Sde_0856"/>
<dbReference type="eggNOG" id="COG0653">
    <property type="taxonomic scope" value="Bacteria"/>
</dbReference>
<dbReference type="HOGENOM" id="CLU_005314_3_0_6"/>
<dbReference type="OrthoDB" id="9805579at2"/>
<dbReference type="Proteomes" id="UP000001947">
    <property type="component" value="Chromosome"/>
</dbReference>
<dbReference type="GO" id="GO:0031522">
    <property type="term" value="C:cell envelope Sec protein transport complex"/>
    <property type="evidence" value="ECO:0007669"/>
    <property type="project" value="TreeGrafter"/>
</dbReference>
<dbReference type="GO" id="GO:0005829">
    <property type="term" value="C:cytosol"/>
    <property type="evidence" value="ECO:0007669"/>
    <property type="project" value="TreeGrafter"/>
</dbReference>
<dbReference type="GO" id="GO:0005886">
    <property type="term" value="C:plasma membrane"/>
    <property type="evidence" value="ECO:0007669"/>
    <property type="project" value="UniProtKB-SubCell"/>
</dbReference>
<dbReference type="GO" id="GO:0005524">
    <property type="term" value="F:ATP binding"/>
    <property type="evidence" value="ECO:0007669"/>
    <property type="project" value="UniProtKB-UniRule"/>
</dbReference>
<dbReference type="GO" id="GO:0046872">
    <property type="term" value="F:metal ion binding"/>
    <property type="evidence" value="ECO:0007669"/>
    <property type="project" value="UniProtKB-KW"/>
</dbReference>
<dbReference type="GO" id="GO:0008564">
    <property type="term" value="F:protein-exporting ATPase activity"/>
    <property type="evidence" value="ECO:0007669"/>
    <property type="project" value="UniProtKB-EC"/>
</dbReference>
<dbReference type="GO" id="GO:0065002">
    <property type="term" value="P:intracellular protein transmembrane transport"/>
    <property type="evidence" value="ECO:0007669"/>
    <property type="project" value="UniProtKB-UniRule"/>
</dbReference>
<dbReference type="GO" id="GO:0017038">
    <property type="term" value="P:protein import"/>
    <property type="evidence" value="ECO:0007669"/>
    <property type="project" value="InterPro"/>
</dbReference>
<dbReference type="GO" id="GO:0006605">
    <property type="term" value="P:protein targeting"/>
    <property type="evidence" value="ECO:0007669"/>
    <property type="project" value="UniProtKB-UniRule"/>
</dbReference>
<dbReference type="GO" id="GO:0043952">
    <property type="term" value="P:protein transport by the Sec complex"/>
    <property type="evidence" value="ECO:0007669"/>
    <property type="project" value="TreeGrafter"/>
</dbReference>
<dbReference type="CDD" id="cd17928">
    <property type="entry name" value="DEXDc_SecA"/>
    <property type="match status" value="1"/>
</dbReference>
<dbReference type="CDD" id="cd18803">
    <property type="entry name" value="SF2_C_secA"/>
    <property type="match status" value="1"/>
</dbReference>
<dbReference type="FunFam" id="3.40.50.300:FF:000113">
    <property type="entry name" value="Preprotein translocase subunit SecA"/>
    <property type="match status" value="1"/>
</dbReference>
<dbReference type="FunFam" id="3.90.1440.10:FF:000001">
    <property type="entry name" value="Preprotein translocase subunit SecA"/>
    <property type="match status" value="1"/>
</dbReference>
<dbReference type="FunFam" id="1.10.3060.10:FF:000003">
    <property type="entry name" value="Protein translocase subunit SecA"/>
    <property type="match status" value="1"/>
</dbReference>
<dbReference type="Gene3D" id="1.10.3060.10">
    <property type="entry name" value="Helical scaffold and wing domains of SecA"/>
    <property type="match status" value="1"/>
</dbReference>
<dbReference type="Gene3D" id="3.40.50.300">
    <property type="entry name" value="P-loop containing nucleotide triphosphate hydrolases"/>
    <property type="match status" value="2"/>
</dbReference>
<dbReference type="Gene3D" id="3.90.1440.10">
    <property type="entry name" value="SecA, preprotein cross-linking domain"/>
    <property type="match status" value="1"/>
</dbReference>
<dbReference type="HAMAP" id="MF_01382">
    <property type="entry name" value="SecA"/>
    <property type="match status" value="1"/>
</dbReference>
<dbReference type="InterPro" id="IPR014001">
    <property type="entry name" value="Helicase_ATP-bd"/>
</dbReference>
<dbReference type="InterPro" id="IPR001650">
    <property type="entry name" value="Helicase_C-like"/>
</dbReference>
<dbReference type="InterPro" id="IPR027417">
    <property type="entry name" value="P-loop_NTPase"/>
</dbReference>
<dbReference type="InterPro" id="IPR004027">
    <property type="entry name" value="SEC_C_motif"/>
</dbReference>
<dbReference type="InterPro" id="IPR000185">
    <property type="entry name" value="SecA"/>
</dbReference>
<dbReference type="InterPro" id="IPR020937">
    <property type="entry name" value="SecA_CS"/>
</dbReference>
<dbReference type="InterPro" id="IPR011115">
    <property type="entry name" value="SecA_DEAD"/>
</dbReference>
<dbReference type="InterPro" id="IPR014018">
    <property type="entry name" value="SecA_motor_DEAD"/>
</dbReference>
<dbReference type="InterPro" id="IPR011130">
    <property type="entry name" value="SecA_preprotein_X-link_dom"/>
</dbReference>
<dbReference type="InterPro" id="IPR044722">
    <property type="entry name" value="SecA_SF2_C"/>
</dbReference>
<dbReference type="InterPro" id="IPR011116">
    <property type="entry name" value="SecA_Wing/Scaffold"/>
</dbReference>
<dbReference type="InterPro" id="IPR036266">
    <property type="entry name" value="SecA_Wing/Scaffold_sf"/>
</dbReference>
<dbReference type="InterPro" id="IPR036670">
    <property type="entry name" value="SecA_X-link_sf"/>
</dbReference>
<dbReference type="NCBIfam" id="NF009538">
    <property type="entry name" value="PRK12904.1"/>
    <property type="match status" value="1"/>
</dbReference>
<dbReference type="NCBIfam" id="TIGR00963">
    <property type="entry name" value="secA"/>
    <property type="match status" value="1"/>
</dbReference>
<dbReference type="PANTHER" id="PTHR30612:SF0">
    <property type="entry name" value="CHLOROPLAST PROTEIN-TRANSPORTING ATPASE"/>
    <property type="match status" value="1"/>
</dbReference>
<dbReference type="PANTHER" id="PTHR30612">
    <property type="entry name" value="SECA INNER MEMBRANE COMPONENT OF SEC PROTEIN SECRETION SYSTEM"/>
    <property type="match status" value="1"/>
</dbReference>
<dbReference type="Pfam" id="PF21090">
    <property type="entry name" value="P-loop_SecA"/>
    <property type="match status" value="1"/>
</dbReference>
<dbReference type="Pfam" id="PF02810">
    <property type="entry name" value="SEC-C"/>
    <property type="match status" value="1"/>
</dbReference>
<dbReference type="Pfam" id="PF07517">
    <property type="entry name" value="SecA_DEAD"/>
    <property type="match status" value="1"/>
</dbReference>
<dbReference type="Pfam" id="PF01043">
    <property type="entry name" value="SecA_PP_bind"/>
    <property type="match status" value="1"/>
</dbReference>
<dbReference type="Pfam" id="PF07516">
    <property type="entry name" value="SecA_SW"/>
    <property type="match status" value="1"/>
</dbReference>
<dbReference type="PRINTS" id="PR00906">
    <property type="entry name" value="SECA"/>
</dbReference>
<dbReference type="SMART" id="SM00957">
    <property type="entry name" value="SecA_DEAD"/>
    <property type="match status" value="1"/>
</dbReference>
<dbReference type="SMART" id="SM00958">
    <property type="entry name" value="SecA_PP_bind"/>
    <property type="match status" value="1"/>
</dbReference>
<dbReference type="SUPFAM" id="SSF81886">
    <property type="entry name" value="Helical scaffold and wing domains of SecA"/>
    <property type="match status" value="1"/>
</dbReference>
<dbReference type="SUPFAM" id="SSF52540">
    <property type="entry name" value="P-loop containing nucleoside triphosphate hydrolases"/>
    <property type="match status" value="2"/>
</dbReference>
<dbReference type="SUPFAM" id="SSF81767">
    <property type="entry name" value="Pre-protein crosslinking domain of SecA"/>
    <property type="match status" value="1"/>
</dbReference>
<dbReference type="PROSITE" id="PS01312">
    <property type="entry name" value="SECA"/>
    <property type="match status" value="1"/>
</dbReference>
<dbReference type="PROSITE" id="PS51196">
    <property type="entry name" value="SECA_MOTOR_DEAD"/>
    <property type="match status" value="1"/>
</dbReference>
<reference key="1">
    <citation type="journal article" date="2008" name="PLoS Genet.">
        <title>Complete genome sequence of the complex carbohydrate-degrading marine bacterium, Saccharophagus degradans strain 2-40 T.</title>
        <authorList>
            <person name="Weiner R.M."/>
            <person name="Taylor L.E. II"/>
            <person name="Henrissat B."/>
            <person name="Hauser L."/>
            <person name="Land M."/>
            <person name="Coutinho P.M."/>
            <person name="Rancurel C."/>
            <person name="Saunders E.H."/>
            <person name="Longmire A.G."/>
            <person name="Zhang H."/>
            <person name="Bayer E.A."/>
            <person name="Gilbert H.J."/>
            <person name="Larimer F."/>
            <person name="Zhulin I.B."/>
            <person name="Ekborg N.A."/>
            <person name="Lamed R."/>
            <person name="Richardson P.M."/>
            <person name="Borovok I."/>
            <person name="Hutcheson S."/>
        </authorList>
    </citation>
    <scope>NUCLEOTIDE SEQUENCE [LARGE SCALE GENOMIC DNA]</scope>
    <source>
        <strain>2-40 / ATCC 43961 / DSM 17024</strain>
    </source>
</reference>
<gene>
    <name evidence="1" type="primary">secA</name>
    <name type="ordered locus">Sde_0856</name>
</gene>
<feature type="chain" id="PRO_0000320982" description="Protein translocase subunit SecA">
    <location>
        <begin position="1"/>
        <end position="917"/>
    </location>
</feature>
<feature type="region of interest" description="Disordered" evidence="2">
    <location>
        <begin position="834"/>
        <end position="917"/>
    </location>
</feature>
<feature type="compositionally biased region" description="Basic and acidic residues" evidence="2">
    <location>
        <begin position="839"/>
        <end position="852"/>
    </location>
</feature>
<feature type="compositionally biased region" description="Low complexity" evidence="2">
    <location>
        <begin position="862"/>
        <end position="876"/>
    </location>
</feature>
<feature type="binding site" evidence="1">
    <location>
        <position position="87"/>
    </location>
    <ligand>
        <name>ATP</name>
        <dbReference type="ChEBI" id="CHEBI:30616"/>
    </ligand>
</feature>
<feature type="binding site" evidence="1">
    <location>
        <begin position="105"/>
        <end position="109"/>
    </location>
    <ligand>
        <name>ATP</name>
        <dbReference type="ChEBI" id="CHEBI:30616"/>
    </ligand>
</feature>
<feature type="binding site" evidence="1">
    <location>
        <position position="513"/>
    </location>
    <ligand>
        <name>ATP</name>
        <dbReference type="ChEBI" id="CHEBI:30616"/>
    </ligand>
</feature>
<feature type="binding site" evidence="1">
    <location>
        <position position="900"/>
    </location>
    <ligand>
        <name>Zn(2+)</name>
        <dbReference type="ChEBI" id="CHEBI:29105"/>
    </ligand>
</feature>
<feature type="binding site" evidence="1">
    <location>
        <position position="902"/>
    </location>
    <ligand>
        <name>Zn(2+)</name>
        <dbReference type="ChEBI" id="CHEBI:29105"/>
    </ligand>
</feature>
<feature type="binding site" evidence="1">
    <location>
        <position position="911"/>
    </location>
    <ligand>
        <name>Zn(2+)</name>
        <dbReference type="ChEBI" id="CHEBI:29105"/>
    </ligand>
</feature>
<feature type="binding site" evidence="1">
    <location>
        <position position="912"/>
    </location>
    <ligand>
        <name>Zn(2+)</name>
        <dbReference type="ChEBI" id="CHEBI:29105"/>
    </ligand>
</feature>
<keyword id="KW-0067">ATP-binding</keyword>
<keyword id="KW-0997">Cell inner membrane</keyword>
<keyword id="KW-1003">Cell membrane</keyword>
<keyword id="KW-0963">Cytoplasm</keyword>
<keyword id="KW-0472">Membrane</keyword>
<keyword id="KW-0479">Metal-binding</keyword>
<keyword id="KW-0547">Nucleotide-binding</keyword>
<keyword id="KW-0653">Protein transport</keyword>
<keyword id="KW-1185">Reference proteome</keyword>
<keyword id="KW-1278">Translocase</keyword>
<keyword id="KW-0811">Translocation</keyword>
<keyword id="KW-0813">Transport</keyword>
<keyword id="KW-0862">Zinc</keyword>
<protein>
    <recommendedName>
        <fullName evidence="1">Protein translocase subunit SecA</fullName>
        <ecNumber evidence="1">7.4.2.8</ecNumber>
    </recommendedName>
</protein>